<name>PEPT_STAAW</name>
<accession>Q8NXM6</accession>
<sequence length="408" mass="45848">MKNQLIDRLTRYTTIDTQSDPKSTTTPSTEKQWDLLHLLEKELQQLGLPTDLDENGYLFATLESNIDVDVPTVGFLAHVDTSPDFNASNVKPQIIENYDGKPYKLGNTKRVLDPKVFPELNSLVGHTLMVTDGTSLLGADDKAGIVEIMEAICYLQEHPEIKHGTIRIGFTPDEEIGRGPHKFDVDRFNADFAYTMDGSQYGELQYESFNAAEAVITCHGVNVHPGSAKNAMVNAIRLGEQFDSLLPDSEVPERTEGYEGFYHLMNFEGTVEKATLQYIIRDHDKKQFELRKKRILEIRDDINAHFENYPVKVDISDQYFNMAEKILPLPHIIDIPKRVFAKLDIPANTEPIRGGTDGSQLSFMGLPTPNIFTGCGNFHGPYEYASIDVMEKAVQVIIGIVEDIAENH</sequence>
<reference key="1">
    <citation type="journal article" date="2002" name="Lancet">
        <title>Genome and virulence determinants of high virulence community-acquired MRSA.</title>
        <authorList>
            <person name="Baba T."/>
            <person name="Takeuchi F."/>
            <person name="Kuroda M."/>
            <person name="Yuzawa H."/>
            <person name="Aoki K."/>
            <person name="Oguchi A."/>
            <person name="Nagai Y."/>
            <person name="Iwama N."/>
            <person name="Asano K."/>
            <person name="Naimi T."/>
            <person name="Kuroda H."/>
            <person name="Cui L."/>
            <person name="Yamamoto K."/>
            <person name="Hiramatsu K."/>
        </authorList>
    </citation>
    <scope>NUCLEOTIDE SEQUENCE [LARGE SCALE GENOMIC DNA]</scope>
    <source>
        <strain>MW2</strain>
    </source>
</reference>
<keyword id="KW-0031">Aminopeptidase</keyword>
<keyword id="KW-0963">Cytoplasm</keyword>
<keyword id="KW-0378">Hydrolase</keyword>
<keyword id="KW-0479">Metal-binding</keyword>
<keyword id="KW-0482">Metalloprotease</keyword>
<keyword id="KW-0645">Protease</keyword>
<keyword id="KW-0862">Zinc</keyword>
<organism>
    <name type="scientific">Staphylococcus aureus (strain MW2)</name>
    <dbReference type="NCBI Taxonomy" id="196620"/>
    <lineage>
        <taxon>Bacteria</taxon>
        <taxon>Bacillati</taxon>
        <taxon>Bacillota</taxon>
        <taxon>Bacilli</taxon>
        <taxon>Bacillales</taxon>
        <taxon>Staphylococcaceae</taxon>
        <taxon>Staphylococcus</taxon>
    </lineage>
</organism>
<evidence type="ECO:0000255" key="1">
    <source>
        <dbReference type="HAMAP-Rule" id="MF_00550"/>
    </source>
</evidence>
<evidence type="ECO:0000256" key="2">
    <source>
        <dbReference type="SAM" id="MobiDB-lite"/>
    </source>
</evidence>
<protein>
    <recommendedName>
        <fullName evidence="1">Peptidase T</fullName>
        <ecNumber evidence="1">3.4.11.4</ecNumber>
    </recommendedName>
    <alternativeName>
        <fullName evidence="1">Aminotripeptidase</fullName>
        <shortName evidence="1">Tripeptidase</shortName>
    </alternativeName>
    <alternativeName>
        <fullName evidence="1">Tripeptide aminopeptidase</fullName>
    </alternativeName>
</protein>
<dbReference type="EC" id="3.4.11.4" evidence="1"/>
<dbReference type="EMBL" id="BA000033">
    <property type="protein sequence ID" value="BAB94570.1"/>
    <property type="molecule type" value="Genomic_DNA"/>
</dbReference>
<dbReference type="RefSeq" id="WP_000795826.1">
    <property type="nucleotide sequence ID" value="NC_003923.1"/>
</dbReference>
<dbReference type="SMR" id="Q8NXM6"/>
<dbReference type="MEROPS" id="M20.003"/>
<dbReference type="KEGG" id="sam:MW0705"/>
<dbReference type="HOGENOM" id="CLU_053676_0_0_9"/>
<dbReference type="GO" id="GO:0005829">
    <property type="term" value="C:cytosol"/>
    <property type="evidence" value="ECO:0007669"/>
    <property type="project" value="TreeGrafter"/>
</dbReference>
<dbReference type="GO" id="GO:0008237">
    <property type="term" value="F:metallopeptidase activity"/>
    <property type="evidence" value="ECO:0007669"/>
    <property type="project" value="UniProtKB-KW"/>
</dbReference>
<dbReference type="GO" id="GO:0045148">
    <property type="term" value="F:tripeptide aminopeptidase activity"/>
    <property type="evidence" value="ECO:0007669"/>
    <property type="project" value="UniProtKB-UniRule"/>
</dbReference>
<dbReference type="GO" id="GO:0008270">
    <property type="term" value="F:zinc ion binding"/>
    <property type="evidence" value="ECO:0007669"/>
    <property type="project" value="UniProtKB-UniRule"/>
</dbReference>
<dbReference type="GO" id="GO:0043171">
    <property type="term" value="P:peptide catabolic process"/>
    <property type="evidence" value="ECO:0007669"/>
    <property type="project" value="UniProtKB-UniRule"/>
</dbReference>
<dbReference type="GO" id="GO:0006508">
    <property type="term" value="P:proteolysis"/>
    <property type="evidence" value="ECO:0007669"/>
    <property type="project" value="UniProtKB-UniRule"/>
</dbReference>
<dbReference type="CDD" id="cd03892">
    <property type="entry name" value="M20_peptT"/>
    <property type="match status" value="1"/>
</dbReference>
<dbReference type="FunFam" id="3.30.70.360:FF:000002">
    <property type="entry name" value="Peptidase T"/>
    <property type="match status" value="1"/>
</dbReference>
<dbReference type="Gene3D" id="3.30.70.360">
    <property type="match status" value="1"/>
</dbReference>
<dbReference type="Gene3D" id="3.40.630.10">
    <property type="entry name" value="Zn peptidases"/>
    <property type="match status" value="1"/>
</dbReference>
<dbReference type="HAMAP" id="MF_00550">
    <property type="entry name" value="Aminopeptidase_M20"/>
    <property type="match status" value="1"/>
</dbReference>
<dbReference type="InterPro" id="IPR001261">
    <property type="entry name" value="ArgE/DapE_CS"/>
</dbReference>
<dbReference type="InterPro" id="IPR036264">
    <property type="entry name" value="Bact_exopeptidase_dim_dom"/>
</dbReference>
<dbReference type="InterPro" id="IPR002933">
    <property type="entry name" value="Peptidase_M20"/>
</dbReference>
<dbReference type="InterPro" id="IPR011650">
    <property type="entry name" value="Peptidase_M20_dimer"/>
</dbReference>
<dbReference type="InterPro" id="IPR010161">
    <property type="entry name" value="Peptidase_M20B"/>
</dbReference>
<dbReference type="NCBIfam" id="TIGR01882">
    <property type="entry name" value="peptidase-T"/>
    <property type="match status" value="1"/>
</dbReference>
<dbReference type="NCBIfam" id="NF003976">
    <property type="entry name" value="PRK05469.1"/>
    <property type="match status" value="1"/>
</dbReference>
<dbReference type="NCBIfam" id="NF009920">
    <property type="entry name" value="PRK13381.1"/>
    <property type="match status" value="1"/>
</dbReference>
<dbReference type="PANTHER" id="PTHR42994">
    <property type="entry name" value="PEPTIDASE T"/>
    <property type="match status" value="1"/>
</dbReference>
<dbReference type="PANTHER" id="PTHR42994:SF1">
    <property type="entry name" value="PEPTIDASE T"/>
    <property type="match status" value="1"/>
</dbReference>
<dbReference type="Pfam" id="PF07687">
    <property type="entry name" value="M20_dimer"/>
    <property type="match status" value="1"/>
</dbReference>
<dbReference type="Pfam" id="PF01546">
    <property type="entry name" value="Peptidase_M20"/>
    <property type="match status" value="1"/>
</dbReference>
<dbReference type="PIRSF" id="PIRSF037215">
    <property type="entry name" value="Peptidase_M20B"/>
    <property type="match status" value="1"/>
</dbReference>
<dbReference type="SUPFAM" id="SSF55031">
    <property type="entry name" value="Bacterial exopeptidase dimerisation domain"/>
    <property type="match status" value="1"/>
</dbReference>
<dbReference type="SUPFAM" id="SSF53187">
    <property type="entry name" value="Zn-dependent exopeptidases"/>
    <property type="match status" value="1"/>
</dbReference>
<dbReference type="PROSITE" id="PS00758">
    <property type="entry name" value="ARGE_DAPE_CPG2_1"/>
    <property type="match status" value="1"/>
</dbReference>
<dbReference type="PROSITE" id="PS00759">
    <property type="entry name" value="ARGE_DAPE_CPG2_2"/>
    <property type="match status" value="1"/>
</dbReference>
<gene>
    <name evidence="1" type="primary">pepT</name>
    <name type="ordered locus">MW0705</name>
</gene>
<comment type="function">
    <text evidence="1">Cleaves the N-terminal amino acid of tripeptides.</text>
</comment>
<comment type="catalytic activity">
    <reaction evidence="1">
        <text>Release of the N-terminal residue from a tripeptide.</text>
        <dbReference type="EC" id="3.4.11.4"/>
    </reaction>
</comment>
<comment type="cofactor">
    <cofactor evidence="1">
        <name>Zn(2+)</name>
        <dbReference type="ChEBI" id="CHEBI:29105"/>
    </cofactor>
    <text evidence="1">Binds 2 Zn(2+) ions per subunit.</text>
</comment>
<comment type="subcellular location">
    <subcellularLocation>
        <location evidence="1">Cytoplasm</location>
    </subcellularLocation>
</comment>
<comment type="similarity">
    <text evidence="1">Belongs to the peptidase M20B family.</text>
</comment>
<feature type="chain" id="PRO_0000185317" description="Peptidase T">
    <location>
        <begin position="1"/>
        <end position="408"/>
    </location>
</feature>
<feature type="region of interest" description="Disordered" evidence="2">
    <location>
        <begin position="1"/>
        <end position="28"/>
    </location>
</feature>
<feature type="compositionally biased region" description="Polar residues" evidence="2">
    <location>
        <begin position="11"/>
        <end position="28"/>
    </location>
</feature>
<feature type="active site" evidence="1">
    <location>
        <position position="80"/>
    </location>
</feature>
<feature type="active site" description="Proton acceptor" evidence="1">
    <location>
        <position position="174"/>
    </location>
</feature>
<feature type="binding site" evidence="1">
    <location>
        <position position="78"/>
    </location>
    <ligand>
        <name>Zn(2+)</name>
        <dbReference type="ChEBI" id="CHEBI:29105"/>
        <label>1</label>
    </ligand>
</feature>
<feature type="binding site" evidence="1">
    <location>
        <position position="140"/>
    </location>
    <ligand>
        <name>Zn(2+)</name>
        <dbReference type="ChEBI" id="CHEBI:29105"/>
        <label>1</label>
    </ligand>
</feature>
<feature type="binding site" evidence="1">
    <location>
        <position position="140"/>
    </location>
    <ligand>
        <name>Zn(2+)</name>
        <dbReference type="ChEBI" id="CHEBI:29105"/>
        <label>2</label>
    </ligand>
</feature>
<feature type="binding site" evidence="1">
    <location>
        <position position="175"/>
    </location>
    <ligand>
        <name>Zn(2+)</name>
        <dbReference type="ChEBI" id="CHEBI:29105"/>
        <label>2</label>
    </ligand>
</feature>
<feature type="binding site" evidence="1">
    <location>
        <position position="197"/>
    </location>
    <ligand>
        <name>Zn(2+)</name>
        <dbReference type="ChEBI" id="CHEBI:29105"/>
        <label>1</label>
    </ligand>
</feature>
<feature type="binding site" evidence="1">
    <location>
        <position position="379"/>
    </location>
    <ligand>
        <name>Zn(2+)</name>
        <dbReference type="ChEBI" id="CHEBI:29105"/>
        <label>2</label>
    </ligand>
</feature>
<proteinExistence type="inferred from homology"/>